<dbReference type="EC" id="1.1.1.250"/>
<dbReference type="EMBL" id="L16227">
    <property type="protein sequence ID" value="AAC37430.1"/>
    <property type="molecule type" value="Genomic_DNA"/>
</dbReference>
<dbReference type="EMBL" id="CM000312">
    <property type="status" value="NOT_ANNOTATED_CDS"/>
    <property type="molecule type" value="Genomic_DNA"/>
</dbReference>
<dbReference type="SMR" id="P43066"/>
<dbReference type="PaxDb" id="5476-P43066"/>
<dbReference type="VEuPathDB" id="FungiDB:CAWG_05342"/>
<dbReference type="UniPathway" id="UPA00380"/>
<dbReference type="Proteomes" id="UP000001429">
    <property type="component" value="Chromosome 6"/>
</dbReference>
<dbReference type="GO" id="GO:0047038">
    <property type="term" value="F:D-arabinitol 2-dehydrogenase activity"/>
    <property type="evidence" value="ECO:0000250"/>
    <property type="project" value="UniProtKB"/>
</dbReference>
<dbReference type="GO" id="GO:0050664">
    <property type="term" value="F:oxidoreductase activity, acting on NAD(P)H, oxygen as acceptor"/>
    <property type="evidence" value="ECO:0007669"/>
    <property type="project" value="TreeGrafter"/>
</dbReference>
<dbReference type="GO" id="GO:0051161">
    <property type="term" value="P:arabitol metabolic process"/>
    <property type="evidence" value="ECO:0007669"/>
    <property type="project" value="UniProtKB-UniPathway"/>
</dbReference>
<dbReference type="GO" id="GO:0005975">
    <property type="term" value="P:carbohydrate metabolic process"/>
    <property type="evidence" value="ECO:0000250"/>
    <property type="project" value="UniProtKB"/>
</dbReference>
<dbReference type="FunFam" id="3.40.50.720:FF:000240">
    <property type="entry name" value="SDR family oxidoreductase"/>
    <property type="match status" value="1"/>
</dbReference>
<dbReference type="Gene3D" id="3.40.50.720">
    <property type="entry name" value="NAD(P)-binding Rossmann-like Domain"/>
    <property type="match status" value="1"/>
</dbReference>
<dbReference type="InterPro" id="IPR036291">
    <property type="entry name" value="NAD(P)-bd_dom_sf"/>
</dbReference>
<dbReference type="InterPro" id="IPR020904">
    <property type="entry name" value="Sc_DH/Rdtase_CS"/>
</dbReference>
<dbReference type="InterPro" id="IPR002347">
    <property type="entry name" value="SDR_fam"/>
</dbReference>
<dbReference type="PANTHER" id="PTHR43008">
    <property type="entry name" value="BENZIL REDUCTASE"/>
    <property type="match status" value="1"/>
</dbReference>
<dbReference type="PANTHER" id="PTHR43008:SF14">
    <property type="entry name" value="DEHYDROGENASE ARBD, PUTATIVE-RELATED"/>
    <property type="match status" value="1"/>
</dbReference>
<dbReference type="Pfam" id="PF13561">
    <property type="entry name" value="adh_short_C2"/>
    <property type="match status" value="1"/>
</dbReference>
<dbReference type="PRINTS" id="PR00081">
    <property type="entry name" value="GDHRDH"/>
</dbReference>
<dbReference type="PRINTS" id="PR00080">
    <property type="entry name" value="SDRFAMILY"/>
</dbReference>
<dbReference type="SUPFAM" id="SSF51735">
    <property type="entry name" value="NAD(P)-binding Rossmann-fold domains"/>
    <property type="match status" value="1"/>
</dbReference>
<dbReference type="PROSITE" id="PS00061">
    <property type="entry name" value="ADH_SHORT"/>
    <property type="match status" value="1"/>
</dbReference>
<comment type="catalytic activity">
    <reaction>
        <text>D-arabinitol + NAD(+) = D-ribulose + NADH + H(+)</text>
        <dbReference type="Rhea" id="RHEA:17389"/>
        <dbReference type="ChEBI" id="CHEBI:15378"/>
        <dbReference type="ChEBI" id="CHEBI:17173"/>
        <dbReference type="ChEBI" id="CHEBI:18333"/>
        <dbReference type="ChEBI" id="CHEBI:57540"/>
        <dbReference type="ChEBI" id="CHEBI:57945"/>
        <dbReference type="EC" id="1.1.1.250"/>
    </reaction>
</comment>
<comment type="pathway">
    <text>Carbohydrate metabolism; D-arabinitol metabolism.</text>
</comment>
<comment type="similarity">
    <text evidence="4">Belongs to the short-chain dehydrogenases/reductases (SDR) family.</text>
</comment>
<proteinExistence type="inferred from homology"/>
<evidence type="ECO:0000250" key="1">
    <source>
        <dbReference type="UniProtKB" id="L0E2Z4"/>
    </source>
</evidence>
<evidence type="ECO:0000250" key="2">
    <source>
        <dbReference type="UniProtKB" id="O93868"/>
    </source>
</evidence>
<evidence type="ECO:0000255" key="3">
    <source>
        <dbReference type="PROSITE-ProRule" id="PRU10001"/>
    </source>
</evidence>
<evidence type="ECO:0000305" key="4"/>
<keyword id="KW-0521">NADP</keyword>
<keyword id="KW-0560">Oxidoreductase</keyword>
<name>ARDH_CANAW</name>
<sequence>MDSAYWSYDNIVPSFRLDGKLVILTGGSGGLAAVVSRALLAKGADVALVDMNLERTQQAARDVLQWGEEQMKGKYESPIGQVSAWSCNIGDAEAVDLTFKAINEHHGKISSVLVNTAGYAENFPAEEYPAKNAENLMKVNGLGSFYVSQAFARPLIQNNMTGSIILIGSMSGTIVNDPQPQCMYNMSKAGVIHLARSLACEWAKYNIRVNTLSPGYILTPLTRNVISGHTEMKTEWESKIPMKRMAEPKEFVGSILYLASESASSYTTGHNLVVDGGYECW</sequence>
<accession>P43066</accession>
<reference key="1">
    <citation type="journal article" date="1993" name="J. Bacteriol.">
        <title>D-arabitol metabolism in Candida albicans: studies of the biosynthetic pathway and the gene that encodes NAD-dependent D-arabitol dehydrogenase.</title>
        <authorList>
            <person name="Wong B."/>
            <person name="Murray J.S."/>
            <person name="Castellanos M."/>
            <person name="Croen K.D."/>
        </authorList>
    </citation>
    <scope>NUCLEOTIDE SEQUENCE [GENOMIC DNA]</scope>
    <source>
        <strain>WO-1</strain>
    </source>
</reference>
<reference key="2">
    <citation type="journal article" date="2009" name="Nature">
        <title>Evolution of pathogenicity and sexual reproduction in eight Candida genomes.</title>
        <authorList>
            <person name="Butler G."/>
            <person name="Rasmussen M.D."/>
            <person name="Lin M.F."/>
            <person name="Santos M.A.S."/>
            <person name="Sakthikumar S."/>
            <person name="Munro C.A."/>
            <person name="Rheinbay E."/>
            <person name="Grabherr M."/>
            <person name="Forche A."/>
            <person name="Reedy J.L."/>
            <person name="Agrafioti I."/>
            <person name="Arnaud M.B."/>
            <person name="Bates S."/>
            <person name="Brown A.J.P."/>
            <person name="Brunke S."/>
            <person name="Costanzo M.C."/>
            <person name="Fitzpatrick D.A."/>
            <person name="de Groot P.W.J."/>
            <person name="Harris D."/>
            <person name="Hoyer L.L."/>
            <person name="Hube B."/>
            <person name="Klis F.M."/>
            <person name="Kodira C."/>
            <person name="Lennard N."/>
            <person name="Logue M.E."/>
            <person name="Martin R."/>
            <person name="Neiman A.M."/>
            <person name="Nikolaou E."/>
            <person name="Quail M.A."/>
            <person name="Quinn J."/>
            <person name="Santos M.C."/>
            <person name="Schmitzberger F.F."/>
            <person name="Sherlock G."/>
            <person name="Shah P."/>
            <person name="Silverstein K.A.T."/>
            <person name="Skrzypek M.S."/>
            <person name="Soll D."/>
            <person name="Staggs R."/>
            <person name="Stansfield I."/>
            <person name="Stumpf M.P.H."/>
            <person name="Sudbery P.E."/>
            <person name="Srikantha T."/>
            <person name="Zeng Q."/>
            <person name="Berman J."/>
            <person name="Berriman M."/>
            <person name="Heitman J."/>
            <person name="Gow N.A.R."/>
            <person name="Lorenz M.C."/>
            <person name="Birren B.W."/>
            <person name="Kellis M."/>
            <person name="Cuomo C.A."/>
        </authorList>
    </citation>
    <scope>NUCLEOTIDE SEQUENCE [LARGE SCALE GENOMIC DNA]</scope>
    <source>
        <strain>WO-1</strain>
    </source>
</reference>
<gene>
    <name type="primary">ARD1</name>
    <name type="synonym">ARDH</name>
</gene>
<organism>
    <name type="scientific">Candida albicans (strain WO-1)</name>
    <name type="common">Yeast</name>
    <dbReference type="NCBI Taxonomy" id="294748"/>
    <lineage>
        <taxon>Eukaryota</taxon>
        <taxon>Fungi</taxon>
        <taxon>Dikarya</taxon>
        <taxon>Ascomycota</taxon>
        <taxon>Saccharomycotina</taxon>
        <taxon>Pichiomycetes</taxon>
        <taxon>Debaryomycetaceae</taxon>
        <taxon>Candida/Lodderomyces clade</taxon>
        <taxon>Candida</taxon>
    </lineage>
</organism>
<protein>
    <recommendedName>
        <fullName>D-arabinitol 2-dehydrogenase [ribulose-forming]</fullName>
        <shortName>ARDH</shortName>
        <ecNumber>1.1.1.250</ecNumber>
    </recommendedName>
</protein>
<feature type="chain" id="PRO_0000054517" description="D-arabinitol 2-dehydrogenase [ribulose-forming]">
    <location>
        <begin position="1"/>
        <end position="281"/>
    </location>
</feature>
<feature type="active site" description="Proton donor" evidence="2">
    <location>
        <position position="169"/>
    </location>
</feature>
<feature type="active site" description="Proton acceptor" evidence="3">
    <location>
        <position position="184"/>
    </location>
</feature>
<feature type="active site" description="Lowers pKa of active site Tyr" evidence="2">
    <location>
        <position position="188"/>
    </location>
</feature>
<feature type="binding site" evidence="1">
    <location>
        <position position="31"/>
    </location>
    <ligand>
        <name>NADP(+)</name>
        <dbReference type="ChEBI" id="CHEBI:58349"/>
    </ligand>
</feature>
<feature type="binding site" evidence="1">
    <location>
        <position position="52"/>
    </location>
    <ligand>
        <name>NADP(+)</name>
        <dbReference type="ChEBI" id="CHEBI:58349"/>
    </ligand>
</feature>
<feature type="binding site" evidence="2">
    <location>
        <position position="184"/>
    </location>
    <ligand>
        <name>NADP(+)</name>
        <dbReference type="ChEBI" id="CHEBI:58349"/>
    </ligand>
</feature>
<feature type="binding site" evidence="2">
    <location>
        <position position="188"/>
    </location>
    <ligand>
        <name>NADP(+)</name>
        <dbReference type="ChEBI" id="CHEBI:58349"/>
    </ligand>
</feature>
<feature type="binding site" evidence="2">
    <location>
        <position position="217"/>
    </location>
    <ligand>
        <name>NADP(+)</name>
        <dbReference type="ChEBI" id="CHEBI:58349"/>
    </ligand>
</feature>
<feature type="binding site" evidence="1">
    <location>
        <position position="219"/>
    </location>
    <ligand>
        <name>NADP(+)</name>
        <dbReference type="ChEBI" id="CHEBI:58349"/>
    </ligand>
</feature>